<comment type="function">
    <text evidence="1">Component of the acetyl coenzyme A carboxylase (ACC) complex. First, biotin carboxylase catalyzes the carboxylation of biotin on its carrier protein (BCCP) and then the CO(2) group is transferred by the carboxyltransferase to acetyl-CoA to form malonyl-CoA.</text>
</comment>
<comment type="catalytic activity">
    <reaction evidence="1">
        <text>N(6)-carboxybiotinyl-L-lysyl-[protein] + acetyl-CoA = N(6)-biotinyl-L-lysyl-[protein] + malonyl-CoA</text>
        <dbReference type="Rhea" id="RHEA:54728"/>
        <dbReference type="Rhea" id="RHEA-COMP:10505"/>
        <dbReference type="Rhea" id="RHEA-COMP:10506"/>
        <dbReference type="ChEBI" id="CHEBI:57288"/>
        <dbReference type="ChEBI" id="CHEBI:57384"/>
        <dbReference type="ChEBI" id="CHEBI:83144"/>
        <dbReference type="ChEBI" id="CHEBI:83145"/>
        <dbReference type="EC" id="2.1.3.15"/>
    </reaction>
</comment>
<comment type="pathway">
    <text evidence="1">Lipid metabolism; malonyl-CoA biosynthesis; malonyl-CoA from acetyl-CoA: step 1/1.</text>
</comment>
<comment type="subunit">
    <text evidence="1">Acetyl-CoA carboxylase is a heterohexamer composed of biotin carboxyl carrier protein (AccB), biotin carboxylase (AccC) and two subunits each of ACCase subunit alpha (AccA) and ACCase subunit beta (AccD).</text>
</comment>
<comment type="subcellular location">
    <subcellularLocation>
        <location evidence="1">Cytoplasm</location>
    </subcellularLocation>
</comment>
<comment type="similarity">
    <text evidence="1">Belongs to the AccA family.</text>
</comment>
<feature type="chain" id="PRO_0000223829" description="Acetyl-coenzyme A carboxylase carboxyl transferase subunit alpha">
    <location>
        <begin position="1"/>
        <end position="314"/>
    </location>
</feature>
<feature type="domain" description="CoA carboxyltransferase C-terminal" evidence="2">
    <location>
        <begin position="32"/>
        <end position="289"/>
    </location>
</feature>
<reference key="1">
    <citation type="journal article" date="2001" name="Lancet">
        <title>Whole genome sequencing of meticillin-resistant Staphylococcus aureus.</title>
        <authorList>
            <person name="Kuroda M."/>
            <person name="Ohta T."/>
            <person name="Uchiyama I."/>
            <person name="Baba T."/>
            <person name="Yuzawa H."/>
            <person name="Kobayashi I."/>
            <person name="Cui L."/>
            <person name="Oguchi A."/>
            <person name="Aoki K."/>
            <person name="Nagai Y."/>
            <person name="Lian J.-Q."/>
            <person name="Ito T."/>
            <person name="Kanamori M."/>
            <person name="Matsumaru H."/>
            <person name="Maruyama A."/>
            <person name="Murakami H."/>
            <person name="Hosoyama A."/>
            <person name="Mizutani-Ui Y."/>
            <person name="Takahashi N.K."/>
            <person name="Sawano T."/>
            <person name="Inoue R."/>
            <person name="Kaito C."/>
            <person name="Sekimizu K."/>
            <person name="Hirakawa H."/>
            <person name="Kuhara S."/>
            <person name="Goto S."/>
            <person name="Yabuzaki J."/>
            <person name="Kanehisa M."/>
            <person name="Yamashita A."/>
            <person name="Oshima K."/>
            <person name="Furuya K."/>
            <person name="Yoshino C."/>
            <person name="Shiba T."/>
            <person name="Hattori M."/>
            <person name="Ogasawara N."/>
            <person name="Hayashi H."/>
            <person name="Hiramatsu K."/>
        </authorList>
    </citation>
    <scope>NUCLEOTIDE SEQUENCE [LARGE SCALE GENOMIC DNA]</scope>
    <source>
        <strain>Mu50 / ATCC 700699</strain>
    </source>
</reference>
<keyword id="KW-0067">ATP-binding</keyword>
<keyword id="KW-0963">Cytoplasm</keyword>
<keyword id="KW-0275">Fatty acid biosynthesis</keyword>
<keyword id="KW-0276">Fatty acid metabolism</keyword>
<keyword id="KW-0444">Lipid biosynthesis</keyword>
<keyword id="KW-0443">Lipid metabolism</keyword>
<keyword id="KW-0547">Nucleotide-binding</keyword>
<keyword id="KW-0808">Transferase</keyword>
<gene>
    <name evidence="1" type="primary">accA</name>
    <name type="ordered locus">SAV1700</name>
</gene>
<protein>
    <recommendedName>
        <fullName evidence="1">Acetyl-coenzyme A carboxylase carboxyl transferase subunit alpha</fullName>
        <shortName evidence="1">ACCase subunit alpha</shortName>
        <shortName evidence="1">Acetyl-CoA carboxylase carboxyltransferase subunit alpha</shortName>
        <ecNumber evidence="1">2.1.3.15</ecNumber>
    </recommendedName>
</protein>
<name>ACCA_STAAM</name>
<dbReference type="EC" id="2.1.3.15" evidence="1"/>
<dbReference type="EMBL" id="BA000017">
    <property type="protein sequence ID" value="BAB57862.1"/>
    <property type="molecule type" value="Genomic_DNA"/>
</dbReference>
<dbReference type="RefSeq" id="WP_000883648.1">
    <property type="nucleotide sequence ID" value="NC_002758.2"/>
</dbReference>
<dbReference type="SMR" id="Q99TG3"/>
<dbReference type="KEGG" id="sav:SAV1700"/>
<dbReference type="HOGENOM" id="CLU_015486_0_2_9"/>
<dbReference type="PhylomeDB" id="Q99TG3"/>
<dbReference type="UniPathway" id="UPA00655">
    <property type="reaction ID" value="UER00711"/>
</dbReference>
<dbReference type="Proteomes" id="UP000002481">
    <property type="component" value="Chromosome"/>
</dbReference>
<dbReference type="GO" id="GO:0009317">
    <property type="term" value="C:acetyl-CoA carboxylase complex"/>
    <property type="evidence" value="ECO:0007669"/>
    <property type="project" value="InterPro"/>
</dbReference>
<dbReference type="GO" id="GO:0003989">
    <property type="term" value="F:acetyl-CoA carboxylase activity"/>
    <property type="evidence" value="ECO:0007669"/>
    <property type="project" value="InterPro"/>
</dbReference>
<dbReference type="GO" id="GO:0005524">
    <property type="term" value="F:ATP binding"/>
    <property type="evidence" value="ECO:0007669"/>
    <property type="project" value="UniProtKB-KW"/>
</dbReference>
<dbReference type="GO" id="GO:0016743">
    <property type="term" value="F:carboxyl- or carbamoyltransferase activity"/>
    <property type="evidence" value="ECO:0007669"/>
    <property type="project" value="UniProtKB-UniRule"/>
</dbReference>
<dbReference type="GO" id="GO:0006633">
    <property type="term" value="P:fatty acid biosynthetic process"/>
    <property type="evidence" value="ECO:0007669"/>
    <property type="project" value="UniProtKB-KW"/>
</dbReference>
<dbReference type="GO" id="GO:2001295">
    <property type="term" value="P:malonyl-CoA biosynthetic process"/>
    <property type="evidence" value="ECO:0007669"/>
    <property type="project" value="UniProtKB-UniRule"/>
</dbReference>
<dbReference type="Gene3D" id="3.90.226.10">
    <property type="entry name" value="2-enoyl-CoA Hydratase, Chain A, domain 1"/>
    <property type="match status" value="1"/>
</dbReference>
<dbReference type="HAMAP" id="MF_00823">
    <property type="entry name" value="AcetylCoA_CT_alpha"/>
    <property type="match status" value="1"/>
</dbReference>
<dbReference type="InterPro" id="IPR001095">
    <property type="entry name" value="Acetyl_CoA_COase_a_su"/>
</dbReference>
<dbReference type="InterPro" id="IPR029045">
    <property type="entry name" value="ClpP/crotonase-like_dom_sf"/>
</dbReference>
<dbReference type="InterPro" id="IPR011763">
    <property type="entry name" value="COA_CT_C"/>
</dbReference>
<dbReference type="NCBIfam" id="TIGR00513">
    <property type="entry name" value="accA"/>
    <property type="match status" value="1"/>
</dbReference>
<dbReference type="NCBIfam" id="NF041504">
    <property type="entry name" value="AccA_sub"/>
    <property type="match status" value="1"/>
</dbReference>
<dbReference type="NCBIfam" id="NF004344">
    <property type="entry name" value="PRK05724.1"/>
    <property type="match status" value="1"/>
</dbReference>
<dbReference type="PANTHER" id="PTHR42853">
    <property type="entry name" value="ACETYL-COENZYME A CARBOXYLASE CARBOXYL TRANSFERASE SUBUNIT ALPHA"/>
    <property type="match status" value="1"/>
</dbReference>
<dbReference type="PANTHER" id="PTHR42853:SF3">
    <property type="entry name" value="ACETYL-COENZYME A CARBOXYLASE CARBOXYL TRANSFERASE SUBUNIT ALPHA, CHLOROPLASTIC"/>
    <property type="match status" value="1"/>
</dbReference>
<dbReference type="Pfam" id="PF03255">
    <property type="entry name" value="ACCA"/>
    <property type="match status" value="1"/>
</dbReference>
<dbReference type="PRINTS" id="PR01069">
    <property type="entry name" value="ACCCTRFRASEA"/>
</dbReference>
<dbReference type="SUPFAM" id="SSF52096">
    <property type="entry name" value="ClpP/crotonase"/>
    <property type="match status" value="1"/>
</dbReference>
<dbReference type="PROSITE" id="PS50989">
    <property type="entry name" value="COA_CT_CTER"/>
    <property type="match status" value="1"/>
</dbReference>
<proteinExistence type="inferred from homology"/>
<accession>Q99TG3</accession>
<organism>
    <name type="scientific">Staphylococcus aureus (strain Mu50 / ATCC 700699)</name>
    <dbReference type="NCBI Taxonomy" id="158878"/>
    <lineage>
        <taxon>Bacteria</taxon>
        <taxon>Bacillati</taxon>
        <taxon>Bacillota</taxon>
        <taxon>Bacilli</taxon>
        <taxon>Bacillales</taxon>
        <taxon>Staphylococcaceae</taxon>
        <taxon>Staphylococcus</taxon>
    </lineage>
</organism>
<evidence type="ECO:0000255" key="1">
    <source>
        <dbReference type="HAMAP-Rule" id="MF_00823"/>
    </source>
</evidence>
<evidence type="ECO:0000255" key="2">
    <source>
        <dbReference type="PROSITE-ProRule" id="PRU01137"/>
    </source>
</evidence>
<sequence length="314" mass="35056">MLDFEKPLFEIRNKIESLKESQDKNDVDLQEEIDMLEASLERETKKIYTNLKPWDRVQIARLQERPTTLDYIPYIFDSFMELHGDRNFRDDPAMIGGIGFLNGRAVTVIGQQRGKDTKDNIYRNFGMAHPEGYRKALRLMKQAEKFNRPIFTFIDTKGAYPGKAAEERGQSESIATNLIEMASLKVPVIAIVIGEGGSGGALGIGIANKVLMLENSTYSVISPEGAAALLWKDSNLAKIAAETMKITAHDIKQLGIIDDVISEPLGGAHKDVEQQALAIKSAFVAQLDSLESLSRDEIANDRFEKFRNIGSYIE</sequence>